<accession>B8II09</accession>
<comment type="function">
    <text evidence="1">Catalyzes the hydrolytic cleavage of the carbon-nitrogen bond in imidazolone-5-propanoate to yield N-formimidoyl-L-glutamate. It is the third step in the universal histidine degradation pathway.</text>
</comment>
<comment type="catalytic activity">
    <reaction evidence="1">
        <text>4-imidazolone-5-propanoate + H2O = N-formimidoyl-L-glutamate</text>
        <dbReference type="Rhea" id="RHEA:23660"/>
        <dbReference type="ChEBI" id="CHEBI:15377"/>
        <dbReference type="ChEBI" id="CHEBI:58928"/>
        <dbReference type="ChEBI" id="CHEBI:77893"/>
        <dbReference type="EC" id="3.5.2.7"/>
    </reaction>
</comment>
<comment type="cofactor">
    <cofactor evidence="1">
        <name>Zn(2+)</name>
        <dbReference type="ChEBI" id="CHEBI:29105"/>
    </cofactor>
    <cofactor evidence="1">
        <name>Fe(3+)</name>
        <dbReference type="ChEBI" id="CHEBI:29034"/>
    </cofactor>
    <text evidence="1">Binds 1 zinc or iron ion per subunit.</text>
</comment>
<comment type="pathway">
    <text evidence="1">Amino-acid degradation; L-histidine degradation into L-glutamate; N-formimidoyl-L-glutamate from L-histidine: step 3/3.</text>
</comment>
<comment type="subcellular location">
    <subcellularLocation>
        <location evidence="1">Cytoplasm</location>
    </subcellularLocation>
</comment>
<comment type="similarity">
    <text evidence="1">Belongs to the metallo-dependent hydrolases superfamily. HutI family.</text>
</comment>
<feature type="chain" id="PRO_1000133884" description="Imidazolonepropionase">
    <location>
        <begin position="1"/>
        <end position="400"/>
    </location>
</feature>
<feature type="binding site" evidence="1">
    <location>
        <position position="70"/>
    </location>
    <ligand>
        <name>Fe(3+)</name>
        <dbReference type="ChEBI" id="CHEBI:29034"/>
    </ligand>
</feature>
<feature type="binding site" evidence="1">
    <location>
        <position position="70"/>
    </location>
    <ligand>
        <name>Zn(2+)</name>
        <dbReference type="ChEBI" id="CHEBI:29105"/>
    </ligand>
</feature>
<feature type="binding site" evidence="1">
    <location>
        <position position="72"/>
    </location>
    <ligand>
        <name>Fe(3+)</name>
        <dbReference type="ChEBI" id="CHEBI:29034"/>
    </ligand>
</feature>
<feature type="binding site" evidence="1">
    <location>
        <position position="72"/>
    </location>
    <ligand>
        <name>Zn(2+)</name>
        <dbReference type="ChEBI" id="CHEBI:29105"/>
    </ligand>
</feature>
<feature type="binding site" evidence="1">
    <location>
        <position position="79"/>
    </location>
    <ligand>
        <name>4-imidazolone-5-propanoate</name>
        <dbReference type="ChEBI" id="CHEBI:77893"/>
    </ligand>
</feature>
<feature type="binding site" evidence="1">
    <location>
        <position position="142"/>
    </location>
    <ligand>
        <name>4-imidazolone-5-propanoate</name>
        <dbReference type="ChEBI" id="CHEBI:77893"/>
    </ligand>
</feature>
<feature type="binding site" evidence="1">
    <location>
        <position position="142"/>
    </location>
    <ligand>
        <name>N-formimidoyl-L-glutamate</name>
        <dbReference type="ChEBI" id="CHEBI:58928"/>
    </ligand>
</feature>
<feature type="binding site" evidence="1">
    <location>
        <position position="175"/>
    </location>
    <ligand>
        <name>4-imidazolone-5-propanoate</name>
        <dbReference type="ChEBI" id="CHEBI:77893"/>
    </ligand>
</feature>
<feature type="binding site" evidence="1">
    <location>
        <position position="239"/>
    </location>
    <ligand>
        <name>Fe(3+)</name>
        <dbReference type="ChEBI" id="CHEBI:29034"/>
    </ligand>
</feature>
<feature type="binding site" evidence="1">
    <location>
        <position position="239"/>
    </location>
    <ligand>
        <name>Zn(2+)</name>
        <dbReference type="ChEBI" id="CHEBI:29105"/>
    </ligand>
</feature>
<feature type="binding site" evidence="1">
    <location>
        <position position="242"/>
    </location>
    <ligand>
        <name>4-imidazolone-5-propanoate</name>
        <dbReference type="ChEBI" id="CHEBI:77893"/>
    </ligand>
</feature>
<feature type="binding site" evidence="1">
    <location>
        <position position="314"/>
    </location>
    <ligand>
        <name>Fe(3+)</name>
        <dbReference type="ChEBI" id="CHEBI:29034"/>
    </ligand>
</feature>
<feature type="binding site" evidence="1">
    <location>
        <position position="314"/>
    </location>
    <ligand>
        <name>Zn(2+)</name>
        <dbReference type="ChEBI" id="CHEBI:29105"/>
    </ligand>
</feature>
<feature type="binding site" evidence="1">
    <location>
        <position position="316"/>
    </location>
    <ligand>
        <name>N-formimidoyl-L-glutamate</name>
        <dbReference type="ChEBI" id="CHEBI:58928"/>
    </ligand>
</feature>
<feature type="binding site" evidence="1">
    <location>
        <position position="318"/>
    </location>
    <ligand>
        <name>N-formimidoyl-L-glutamate</name>
        <dbReference type="ChEBI" id="CHEBI:58928"/>
    </ligand>
</feature>
<feature type="binding site" evidence="1">
    <location>
        <position position="319"/>
    </location>
    <ligand>
        <name>4-imidazolone-5-propanoate</name>
        <dbReference type="ChEBI" id="CHEBI:77893"/>
    </ligand>
</feature>
<gene>
    <name evidence="1" type="primary">hutI</name>
    <name type="ordered locus">Mnod_1039</name>
</gene>
<keyword id="KW-0963">Cytoplasm</keyword>
<keyword id="KW-0369">Histidine metabolism</keyword>
<keyword id="KW-0378">Hydrolase</keyword>
<keyword id="KW-0408">Iron</keyword>
<keyword id="KW-0479">Metal-binding</keyword>
<keyword id="KW-1185">Reference proteome</keyword>
<keyword id="KW-0862">Zinc</keyword>
<evidence type="ECO:0000255" key="1">
    <source>
        <dbReference type="HAMAP-Rule" id="MF_00372"/>
    </source>
</evidence>
<protein>
    <recommendedName>
        <fullName evidence="1">Imidazolonepropionase</fullName>
        <ecNumber evidence="1">3.5.2.7</ecNumber>
    </recommendedName>
    <alternativeName>
        <fullName evidence="1">Imidazolone-5-propionate hydrolase</fullName>
    </alternativeName>
</protein>
<name>HUTI_METNO</name>
<organism>
    <name type="scientific">Methylobacterium nodulans (strain LMG 21967 / CNCM I-2342 / ORS 2060)</name>
    <dbReference type="NCBI Taxonomy" id="460265"/>
    <lineage>
        <taxon>Bacteria</taxon>
        <taxon>Pseudomonadati</taxon>
        <taxon>Pseudomonadota</taxon>
        <taxon>Alphaproteobacteria</taxon>
        <taxon>Hyphomicrobiales</taxon>
        <taxon>Methylobacteriaceae</taxon>
        <taxon>Methylobacterium</taxon>
    </lineage>
</organism>
<reference key="1">
    <citation type="submission" date="2009-01" db="EMBL/GenBank/DDBJ databases">
        <title>Complete sequence of chromosome of Methylobacterium nodulans ORS 2060.</title>
        <authorList>
            <consortium name="US DOE Joint Genome Institute"/>
            <person name="Lucas S."/>
            <person name="Copeland A."/>
            <person name="Lapidus A."/>
            <person name="Glavina del Rio T."/>
            <person name="Dalin E."/>
            <person name="Tice H."/>
            <person name="Bruce D."/>
            <person name="Goodwin L."/>
            <person name="Pitluck S."/>
            <person name="Sims D."/>
            <person name="Brettin T."/>
            <person name="Detter J.C."/>
            <person name="Han C."/>
            <person name="Larimer F."/>
            <person name="Land M."/>
            <person name="Hauser L."/>
            <person name="Kyrpides N."/>
            <person name="Ivanova N."/>
            <person name="Marx C.J."/>
            <person name="Richardson P."/>
        </authorList>
    </citation>
    <scope>NUCLEOTIDE SEQUENCE [LARGE SCALE GENOMIC DNA]</scope>
    <source>
        <strain>LMG 21967 / CNCM I-2342 / ORS 2060</strain>
    </source>
</reference>
<sequence>MQCDRLWHNARLATLAESRPGLGLVEDGVIAARDGRILHAGPTAEAPSFAARETIDCEGRWITPGLIDCHTHLVFGGDRAQEFEARLAGASYEEIARAGGGIVSTVRATRAASEDDLVAGALRRLDALIAEGVTTVEVKSGYGLSLAAERASLRAARRLGAERDVTVTTTFLGAHALPPEESDRDRFIDRICAEMLPAIAQEGLADAVDAFCEGIAFSPVETARVFEAARDAGLPVKLHADQLSNLGGAALAARFGALSADHLEYTDEAGAAAMAQAGTVAVLLPGAFYFIRETKVPPVDLFRRHGTRIALATDCNPGTSPLTSLLLVLNMGATLFRLTVEECLAGVTREAARALGRLHDLGTLEAGKWCDLAIWDIERPAELVYRMGFNPLHARIRRGR</sequence>
<proteinExistence type="inferred from homology"/>
<dbReference type="EC" id="3.5.2.7" evidence="1"/>
<dbReference type="EMBL" id="CP001349">
    <property type="protein sequence ID" value="ACL56047.1"/>
    <property type="molecule type" value="Genomic_DNA"/>
</dbReference>
<dbReference type="RefSeq" id="WP_015927745.1">
    <property type="nucleotide sequence ID" value="NC_011894.1"/>
</dbReference>
<dbReference type="SMR" id="B8II09"/>
<dbReference type="STRING" id="460265.Mnod_1039"/>
<dbReference type="KEGG" id="mno:Mnod_1039"/>
<dbReference type="eggNOG" id="COG1228">
    <property type="taxonomic scope" value="Bacteria"/>
</dbReference>
<dbReference type="HOGENOM" id="CLU_041647_0_0_5"/>
<dbReference type="OrthoDB" id="9776455at2"/>
<dbReference type="UniPathway" id="UPA00379">
    <property type="reaction ID" value="UER00551"/>
</dbReference>
<dbReference type="Proteomes" id="UP000008207">
    <property type="component" value="Chromosome"/>
</dbReference>
<dbReference type="GO" id="GO:0005737">
    <property type="term" value="C:cytoplasm"/>
    <property type="evidence" value="ECO:0007669"/>
    <property type="project" value="UniProtKB-SubCell"/>
</dbReference>
<dbReference type="GO" id="GO:0050480">
    <property type="term" value="F:imidazolonepropionase activity"/>
    <property type="evidence" value="ECO:0007669"/>
    <property type="project" value="UniProtKB-UniRule"/>
</dbReference>
<dbReference type="GO" id="GO:0005506">
    <property type="term" value="F:iron ion binding"/>
    <property type="evidence" value="ECO:0007669"/>
    <property type="project" value="UniProtKB-UniRule"/>
</dbReference>
<dbReference type="GO" id="GO:0008270">
    <property type="term" value="F:zinc ion binding"/>
    <property type="evidence" value="ECO:0007669"/>
    <property type="project" value="UniProtKB-UniRule"/>
</dbReference>
<dbReference type="GO" id="GO:0019556">
    <property type="term" value="P:L-histidine catabolic process to glutamate and formamide"/>
    <property type="evidence" value="ECO:0007669"/>
    <property type="project" value="UniProtKB-UniPathway"/>
</dbReference>
<dbReference type="GO" id="GO:0019557">
    <property type="term" value="P:L-histidine catabolic process to glutamate and formate"/>
    <property type="evidence" value="ECO:0007669"/>
    <property type="project" value="UniProtKB-UniPathway"/>
</dbReference>
<dbReference type="CDD" id="cd01296">
    <property type="entry name" value="Imidazolone-5PH"/>
    <property type="match status" value="1"/>
</dbReference>
<dbReference type="FunFam" id="3.20.20.140:FF:000007">
    <property type="entry name" value="Imidazolonepropionase"/>
    <property type="match status" value="1"/>
</dbReference>
<dbReference type="Gene3D" id="3.20.20.140">
    <property type="entry name" value="Metal-dependent hydrolases"/>
    <property type="match status" value="1"/>
</dbReference>
<dbReference type="Gene3D" id="2.30.40.10">
    <property type="entry name" value="Urease, subunit C, domain 1"/>
    <property type="match status" value="1"/>
</dbReference>
<dbReference type="HAMAP" id="MF_00372">
    <property type="entry name" value="HutI"/>
    <property type="match status" value="1"/>
</dbReference>
<dbReference type="InterPro" id="IPR006680">
    <property type="entry name" value="Amidohydro-rel"/>
</dbReference>
<dbReference type="InterPro" id="IPR005920">
    <property type="entry name" value="HutI"/>
</dbReference>
<dbReference type="InterPro" id="IPR011059">
    <property type="entry name" value="Metal-dep_hydrolase_composite"/>
</dbReference>
<dbReference type="InterPro" id="IPR032466">
    <property type="entry name" value="Metal_Hydrolase"/>
</dbReference>
<dbReference type="NCBIfam" id="TIGR01224">
    <property type="entry name" value="hutI"/>
    <property type="match status" value="1"/>
</dbReference>
<dbReference type="PANTHER" id="PTHR42752">
    <property type="entry name" value="IMIDAZOLONEPROPIONASE"/>
    <property type="match status" value="1"/>
</dbReference>
<dbReference type="PANTHER" id="PTHR42752:SF1">
    <property type="entry name" value="IMIDAZOLONEPROPIONASE-RELATED"/>
    <property type="match status" value="1"/>
</dbReference>
<dbReference type="Pfam" id="PF01979">
    <property type="entry name" value="Amidohydro_1"/>
    <property type="match status" value="1"/>
</dbReference>
<dbReference type="SUPFAM" id="SSF51338">
    <property type="entry name" value="Composite domain of metallo-dependent hydrolases"/>
    <property type="match status" value="1"/>
</dbReference>
<dbReference type="SUPFAM" id="SSF51556">
    <property type="entry name" value="Metallo-dependent hydrolases"/>
    <property type="match status" value="1"/>
</dbReference>